<sequence length="661" mass="73636">MAAASTPPRAERKRXSWSRLPGAQRESAGLAKKCPFSLELAESGPPSSALYAPVSPPSAPEPAPPASPASPAPPAADQGPQPPVSLDPRVSIYSVRRPLLARTHIQGRVYNFLERPTGWKCFAYHFTVFLIVLVCLIFSVLSTIEQYATLATGTLFWMEIVLVVFFGTEYVVRLWSAGCRSKYVGLWGRLRFARKPISIIDLIVVVASMVVLCVGSKGQVFATSAIRGIRFLQILRMLHVDRQGGTWRLLGSVVFIHRQELITTLYIGFLGLIFSSYFVYLAEKDAVNESGRVEFGSYADALWWGVVTVTTIGYGDKVPQTWVGKTIASCFSVFAISFFALPAGILGSGFALKVQQKQRQKHFNRQIPAAASLIQTAWRCYAAENPDSATWKIYIRKPTRGHALLSPSPKPKKSAMVKKKKFKLDKDNGVSPGEKTLPVPQITCEPPEERRPDHFPVDSHDGSVRKSPALLEVSTPQFLRTNSFAEDLDLEGETLLAPITHVSQLREHHRATVKVIRRMQYFVAKKKFQQARKPYDVRDVIEQYSQGHLNLMVRIKELQRRLDQSIGKPSLFVPISEKSKDRGSNSIGARLNRVEDKVTQLDQRLVLIADMLQQLLALHQGRCHGGAHPAQARDGDPADPELFLPTYEQLTVPRRDPEEGS</sequence>
<organism>
    <name type="scientific">Oryctolagus cuniculus</name>
    <name type="common">Rabbit</name>
    <dbReference type="NCBI Taxonomy" id="9986"/>
    <lineage>
        <taxon>Eukaryota</taxon>
        <taxon>Metazoa</taxon>
        <taxon>Chordata</taxon>
        <taxon>Craniata</taxon>
        <taxon>Vertebrata</taxon>
        <taxon>Euteleostomi</taxon>
        <taxon>Mammalia</taxon>
        <taxon>Eutheria</taxon>
        <taxon>Euarchontoglires</taxon>
        <taxon>Glires</taxon>
        <taxon>Lagomorpha</taxon>
        <taxon>Leporidae</taxon>
        <taxon>Oryctolagus</taxon>
    </lineage>
</organism>
<reference key="1">
    <citation type="journal article" date="2011" name="Nature">
        <title>A high-resolution map of human evolutionary constraint using 29 mammals.</title>
        <authorList>
            <person name="Lindblad-Toh K."/>
            <person name="Garber M."/>
            <person name="Zuk O."/>
            <person name="Lin M.F."/>
            <person name="Parker B.J."/>
            <person name="Washietl S."/>
            <person name="Kheradpour P."/>
            <person name="Ernst J."/>
            <person name="Jordan G."/>
            <person name="Mauceli E."/>
            <person name="Ward L.D."/>
            <person name="Lowe C.B."/>
            <person name="Holloway A.K."/>
            <person name="Clamp M."/>
            <person name="Gnerre S."/>
            <person name="Alfoldi J."/>
            <person name="Beal K."/>
            <person name="Chang J."/>
            <person name="Clawson H."/>
            <person name="Cuff J."/>
            <person name="Di Palma F."/>
            <person name="Fitzgerald S."/>
            <person name="Flicek P."/>
            <person name="Guttman M."/>
            <person name="Hubisz M.J."/>
            <person name="Jaffe D.B."/>
            <person name="Jungreis I."/>
            <person name="Kent W.J."/>
            <person name="Kostka D."/>
            <person name="Lara M."/>
            <person name="Martins A.L."/>
            <person name="Massingham T."/>
            <person name="Moltke I."/>
            <person name="Raney B.J."/>
            <person name="Rasmussen M.D."/>
            <person name="Robinson J."/>
            <person name="Stark A."/>
            <person name="Vilella A.J."/>
            <person name="Wen J."/>
            <person name="Xie X."/>
            <person name="Zody M.C."/>
            <person name="Baldwin J."/>
            <person name="Bloom T."/>
            <person name="Chin C.W."/>
            <person name="Heiman D."/>
            <person name="Nicol R."/>
            <person name="Nusbaum C."/>
            <person name="Young S."/>
            <person name="Wilkinson J."/>
            <person name="Worley K.C."/>
            <person name="Kovar C.L."/>
            <person name="Muzny D.M."/>
            <person name="Gibbs R.A."/>
            <person name="Cree A."/>
            <person name="Dihn H.H."/>
            <person name="Fowler G."/>
            <person name="Jhangiani S."/>
            <person name="Joshi V."/>
            <person name="Lee S."/>
            <person name="Lewis L.R."/>
            <person name="Nazareth L.V."/>
            <person name="Okwuonu G."/>
            <person name="Santibanez J."/>
            <person name="Warren W.C."/>
            <person name="Mardis E.R."/>
            <person name="Weinstock G.M."/>
            <person name="Wilson R.K."/>
            <person name="Delehaunty K."/>
            <person name="Dooling D."/>
            <person name="Fronik C."/>
            <person name="Fulton L."/>
            <person name="Fulton B."/>
            <person name="Graves T."/>
            <person name="Minx P."/>
            <person name="Sodergren E."/>
            <person name="Birney E."/>
            <person name="Margulies E.H."/>
            <person name="Herrero J."/>
            <person name="Green E.D."/>
            <person name="Haussler D."/>
            <person name="Siepel A."/>
            <person name="Goldman N."/>
            <person name="Pollard K.S."/>
            <person name="Pedersen J.S."/>
            <person name="Lander E.S."/>
            <person name="Kellis M."/>
        </authorList>
    </citation>
    <scope>NUCLEOTIDE SEQUENCE [LARGE SCALE GENOMIC DNA]</scope>
    <source>
        <strain>Thorbecke</strain>
    </source>
</reference>
<reference key="2">
    <citation type="submission" date="2000-06" db="EMBL/GenBank/DDBJ databases">
        <title>Patterns of ion channel expression in cardiac hypertrophy.</title>
        <authorList>
            <person name="Sayeed R.A."/>
            <person name="Grace A.A."/>
            <person name="Vandenberg J.I."/>
        </authorList>
    </citation>
    <scope>NUCLEOTIDE SEQUENCE [MRNA] OF 151-304</scope>
    <source>
        <strain>New Zealand white</strain>
        <tissue>Heart</tissue>
    </source>
</reference>
<name>KCNQ1_RABIT</name>
<keyword id="KW-0112">Calmodulin-binding</keyword>
<keyword id="KW-1003">Cell membrane</keyword>
<keyword id="KW-0175">Coiled coil</keyword>
<keyword id="KW-0968">Cytoplasmic vesicle</keyword>
<keyword id="KW-0256">Endoplasmic reticulum</keyword>
<keyword id="KW-0967">Endosome</keyword>
<keyword id="KW-0325">Glycoprotein</keyword>
<keyword id="KW-0407">Ion channel</keyword>
<keyword id="KW-0406">Ion transport</keyword>
<keyword id="KW-0472">Membrane</keyword>
<keyword id="KW-0597">Phosphoprotein</keyword>
<keyword id="KW-0630">Potassium</keyword>
<keyword id="KW-0631">Potassium channel</keyword>
<keyword id="KW-0633">Potassium transport</keyword>
<keyword id="KW-1185">Reference proteome</keyword>
<keyword id="KW-0812">Transmembrane</keyword>
<keyword id="KW-1133">Transmembrane helix</keyword>
<keyword id="KW-0813">Transport</keyword>
<keyword id="KW-0832">Ubl conjugation</keyword>
<keyword id="KW-0851">Voltage-gated channel</keyword>
<proteinExistence type="evidence at transcript level"/>
<evidence type="ECO:0000250" key="1">
    <source>
        <dbReference type="UniProtKB" id="P51787"/>
    </source>
</evidence>
<evidence type="ECO:0000250" key="2">
    <source>
        <dbReference type="UniProtKB" id="P97414"/>
    </source>
</evidence>
<evidence type="ECO:0000250" key="3">
    <source>
        <dbReference type="UniProtKB" id="Q9Z0N7"/>
    </source>
</evidence>
<evidence type="ECO:0000255" key="4"/>
<evidence type="ECO:0000256" key="5">
    <source>
        <dbReference type="SAM" id="MobiDB-lite"/>
    </source>
</evidence>
<evidence type="ECO:0000305" key="6"/>
<gene>
    <name evidence="1" type="primary">KCNQ1</name>
    <name evidence="1" type="synonym">KVLQT1</name>
</gene>
<feature type="chain" id="PRO_0000054026" description="Potassium voltage-gated channel subfamily KQT member 1">
    <location>
        <begin position="1"/>
        <end position="661"/>
    </location>
</feature>
<feature type="topological domain" description="Cytoplasmic" evidence="6">
    <location>
        <begin position="1"/>
        <end position="119"/>
    </location>
</feature>
<feature type="transmembrane region" description="Helical; Name=Segment S1" evidence="1">
    <location>
        <begin position="120"/>
        <end position="141"/>
    </location>
</feature>
<feature type="topological domain" description="Extracellular" evidence="6">
    <location>
        <begin position="142"/>
        <end position="152"/>
    </location>
</feature>
<feature type="transmembrane region" description="Helical; Name=Segment S2" evidence="1">
    <location>
        <begin position="153"/>
        <end position="175"/>
    </location>
</feature>
<feature type="topological domain" description="Cytoplasmic" evidence="6">
    <location>
        <begin position="176"/>
        <end position="191"/>
    </location>
</feature>
<feature type="transmembrane region" description="Helical; Name=Segment S3" evidence="1">
    <location>
        <begin position="192"/>
        <end position="217"/>
    </location>
</feature>
<feature type="topological domain" description="Extracellular" evidence="6">
    <location>
        <begin position="218"/>
        <end position="225"/>
    </location>
</feature>
<feature type="transmembrane region" description="Helical; Voltage-sensor; Name=Segment S4" evidence="1">
    <location>
        <begin position="226"/>
        <end position="241"/>
    </location>
</feature>
<feature type="topological domain" description="Cytoplasmic" evidence="6">
    <location>
        <begin position="242"/>
        <end position="259"/>
    </location>
</feature>
<feature type="transmembrane region" description="Helical; Name=Segment S5" evidence="1">
    <location>
        <begin position="260"/>
        <end position="282"/>
    </location>
</feature>
<feature type="topological domain" description="Extracellular" evidence="6">
    <location>
        <begin position="283"/>
        <end position="298"/>
    </location>
</feature>
<feature type="intramembrane region" description="Pore-forming; Name=Segment H5" evidence="1">
    <location>
        <begin position="299"/>
        <end position="319"/>
    </location>
</feature>
<feature type="topological domain" description="Extracellular" evidence="6">
    <location>
        <begin position="320"/>
        <end position="321"/>
    </location>
</feature>
<feature type="transmembrane region" description="Helical; Name=Segment S6" evidence="1">
    <location>
        <begin position="322"/>
        <end position="347"/>
    </location>
</feature>
<feature type="topological domain" description="Cytoplasmic" evidence="6">
    <location>
        <begin position="348"/>
        <end position="661"/>
    </location>
</feature>
<feature type="region of interest" description="Disordered" evidence="5">
    <location>
        <begin position="1"/>
        <end position="29"/>
    </location>
</feature>
<feature type="region of interest" description="Disordered" evidence="5">
    <location>
        <begin position="42"/>
        <end position="88"/>
    </location>
</feature>
<feature type="region of interest" description="Interaction with KCNE3" evidence="1">
    <location>
        <begin position="237"/>
        <end position="245"/>
    </location>
</feature>
<feature type="region of interest" description="Interaction with CALM" evidence="1">
    <location>
        <begin position="369"/>
        <end position="381"/>
    </location>
</feature>
<feature type="region of interest" description="Interaction with CALM; calcium-dependent" evidence="1">
    <location>
        <begin position="514"/>
        <end position="528"/>
    </location>
</feature>
<feature type="region of interest" description="Interaction with KCNE1 C-terminus" evidence="1">
    <location>
        <begin position="534"/>
        <end position="571"/>
    </location>
</feature>
<feature type="region of interest" description="Interaction with AKAP9" evidence="1">
    <location>
        <begin position="587"/>
        <end position="615"/>
    </location>
</feature>
<feature type="region of interest" description="C-terminal assembly domain (tetramerization)" evidence="1">
    <location>
        <begin position="588"/>
        <end position="619"/>
    </location>
</feature>
<feature type="region of interest" description="Disordered" evidence="5">
    <location>
        <begin position="624"/>
        <end position="661"/>
    </location>
</feature>
<feature type="coiled-coil region" evidence="1">
    <location>
        <begin position="584"/>
        <end position="620"/>
    </location>
</feature>
<feature type="compositionally biased region" description="Pro residues" evidence="5">
    <location>
        <begin position="54"/>
        <end position="85"/>
    </location>
</feature>
<feature type="binding site" evidence="1">
    <location>
        <position position="243"/>
    </location>
    <ligand>
        <name>a 1,2-diacyl-sn-glycero-3-phospho-(1D-myo-inositol-4,5-bisphosphate)</name>
        <dbReference type="ChEBI" id="CHEBI:58456"/>
    </ligand>
</feature>
<feature type="modified residue" description="Phosphoserine; by PKA" evidence="1">
    <location>
        <position position="27"/>
    </location>
</feature>
<feature type="modified residue" description="Phosphoserine" evidence="2">
    <location>
        <position position="406"/>
    </location>
</feature>
<feature type="modified residue" description="Phosphoserine" evidence="2">
    <location>
        <position position="408"/>
    </location>
</feature>
<feature type="glycosylation site" description="N-linked (GlcNAc...) asparagine" evidence="4">
    <location>
        <position position="288"/>
    </location>
</feature>
<comment type="function">
    <text evidence="1 2 3">Pore-forming subunit of the voltage-gated potassium (Kv) channel involved in the regulation of cardiomyocyte excitability and important in normal development and functions of myocardium, inner ear, stomach and colon (By similarity). Associates with KCNE beta subunits that modulates current kinetics (By similarity). Induces a voltage-dependent by rapidly activating and slowly deactivating potassium-selective outward current (By similarity). Also promotes a delayed voltage activated potassium current showing outward rectification characteristic (By similarity). During beta-adrenergic receptor stimulation participates in cardiac repolarization by associating with KCNE1 to form the I(Ks) cardiac potassium current that increases the amplitude and slows down the activation kinetics of outward potassium current I(Ks) (By similarity). Muscarinic agonist oxotremorine-M strongly suppresses KCNQ1/KCNE1 current (By similarity). When associated with KCNE3, forms the potassium channel that is important for cyclic AMP-stimulated intestinal secretion of chloride ions (By similarity). This interaction with KCNE3 is reduced by 17beta-estradiol, resulting in the reduction of currents (By similarity). During conditions of increased substrate load, maintains the driving force for proximal tubular and intestinal sodium ions absorption, gastric acid secretion, and cAMP-induced jejunal chloride ions secretion (By similarity). Allows the provision of potassium ions to the luminal membrane of the secretory canaliculus in the resting state as well as during stimulated acid secretion (By similarity). When associated with KCNE2, forms a heterooligomer complex leading to currents with an apparently instantaneous activation, a rapid deactivation process and a linear current-voltage relationship and decreases the amplitude of the outward current (By similarity). When associated with KCNE4, inhibits voltage-gated potassium channel activity (By similarity). When associated with KCNE5, this complex only conducts current upon strong and continued depolarization (By similarity). Also forms a heterotetramer with KCNQ5 that has a voltage-gated potassium channel activity (By similarity). Binds with phosphatidylinositol 4,5-bisphosphate (By similarity). KCNQ1-KCNE2 channel associates with Na(+)-coupled myo-inositol symporter in the apical membrane of choroid plexus epithelium and regulates the myo-inositol gradient between blood and cerebrospinal fluid with an impact on neuron excitability.</text>
</comment>
<comment type="catalytic activity">
    <reaction evidence="1">
        <text>K(+)(in) = K(+)(out)</text>
        <dbReference type="Rhea" id="RHEA:29463"/>
        <dbReference type="ChEBI" id="CHEBI:29103"/>
    </reaction>
</comment>
<comment type="activity regulation">
    <text evidence="1">PIP2 molecule is essential to activate KCNQ channels by inducing the coupling of the voltage-sensing domain (VSD) and the pore-forming domain (PD). Upon channel activation, PIP2 disrupts the VSD-calmodulin/CALM interactions, causing the release of CALM from the VSD which triggers the opening of the gate. Calcium potentiates KCNQ1 channel current through calcium-bound CALM. Calcium-bound CALM competes with PIP2 to stabilize the channel open state.</text>
</comment>
<comment type="subunit">
    <text evidence="1">Tetramer. Heterotetramer with KCNE1; targets to the membrane raft. Interacts (via C-terminus) with CALM; forms a heterooctameric structure (with 4:4 KCNQ1:CALM stoichiometry) in a calcium-independent manner. Interacts with AKAP9; targets protein kinase A (PKA) catalytic and regulatory subunits and protein phosphatase 1 (PP1) to the KCNQ1-KCNE1 complex, allowing PKA-mediated phosphorylation and increase of delayed rectifier potassium channel activity. Interacts with KCNE2; form a heterooligomer complex that targets to the membrane raft and leading to currents with an apparently instantaneous activation, a rapid deactivation process and a linear current-voltage relationship and decreases the amplitude of the outward current. Interacts with AP2M1; mediates estrogen-induced internalization via clathrin-coated vesicles. Interacts with NEDD4L; promotes internalization and decreases I(Ks) currents. Interacts with USP2; counteracts the NEDD4L-specific down-regulation of I(Ks) and restore plasma membrane localization. Heterotetramer with KCNQ5; has a voltage-gated potassium channel activity. Interacts with KCNE3; four KCNE3 molecules are bound to one KCNQ1 tetramer (4:4 KCNQ1:KCNE3 stoichiometry); alters membrane raft localization; affects KCNQ1 structure and gating properties. Interacts with KCNE4; impairs KCNQ1 localization in lipid rafts and inhibits voltage-gated potassium channel activity. Interacts with KCNE5; impairs KCNQ1 localization in lipid rafts and only conducts current upon strong and continued depolarization. Interacts with SLC5A3; forms coregulatory channel-transporter complexes that modulate Na(+)-coupled myo-inositol influx through the transporter.</text>
</comment>
<comment type="subcellular location">
    <subcellularLocation>
        <location evidence="1">Cell membrane</location>
        <topology evidence="1">Multi-pass membrane protein</topology>
    </subcellularLocation>
    <subcellularLocation>
        <location evidence="1">Cytoplasmic vesicle membrane</location>
    </subcellularLocation>
    <subcellularLocation>
        <location evidence="1">Early endosome</location>
    </subcellularLocation>
    <subcellularLocation>
        <location evidence="1">Membrane raft</location>
    </subcellularLocation>
    <subcellularLocation>
        <location evidence="1">Endoplasmic reticulum</location>
    </subcellularLocation>
    <subcellularLocation>
        <location evidence="1">Basolateral cell membrane</location>
    </subcellularLocation>
    <subcellularLocation>
        <location evidence="2">Apical cell membrane</location>
        <topology evidence="4">Multi-pass membrane protein</topology>
    </subcellularLocation>
    <text evidence="1 2">Colocalized with KCNE3 at the plasma membrane. Upon 17beta-oestradiol treatment, colocalizes with RAB5A at early endosome. Heterotetramer with KCNQ5 is highly retained at the endoplasmic reticulum and is localized outside of lipid raft microdomains. During the early stages of epithelial cell polarization induced by the calcium switch it is removed from the plasma membrane to the endoplasmic reticulum, where it is retained, and redistributed to the basolateral cell surface in a PI3K-dependent manner at a later stage. Colocalizes with SLC5A3 at the apical membrane of choroid plexus epithelium (By similarity).</text>
</comment>
<comment type="domain">
    <text evidence="1">Each channel subunit contains six transmembrane segments (S1-S6) with S1-S4 forming one voltage sensing domain (VSD) and S5-S6 contributing to form one quarter of an interlocking pore-forming domain (PD).</text>
</comment>
<comment type="domain">
    <text evidence="1">The segment S6 is involved in the inhibition of voltage-gated potassium channel activity by KCNE4.</text>
</comment>
<comment type="domain">
    <text evidence="1">The CALM binding domains correspond to the first two membrane-proximal helical regions that interact with a single calmodulin/CALM molecule forming a clamp-like structure. Binding of CALM C-terminus to the first helix is calcium-independent and is essential for assembly of the structure. Binding of CALM N-terminus to the second helix is calcium-dependent and regulates electrophysiological activity of the channel.</text>
</comment>
<comment type="domain">
    <text evidence="1">The C-terminal assembly domain carries the major determinants of tetramerization and subunit assembly specificity. Its coiled-coil region is four-stranded.</text>
</comment>
<comment type="PTM">
    <text evidence="1">Phosphorylation at Ser-27 by PKA; increases delayed rectifier potassium channel activity of the KCNQ1-KCNE1 complex through a macromolecular complex that includes PKA, PP1, and the targeting protein AKAP9.</text>
</comment>
<comment type="PTM">
    <text evidence="1">Ubiquitinated by NEDD4L; promotes internalization. The ubiquitinylated form is internalized through a clathrin-mediated endocytosis by interacting with AP2M1 and is recycled back to the cell membrane via RAB4A and RAB11A.</text>
</comment>
<comment type="PTM">
    <text evidence="1">Deubiquitinated by USP2; counteracts the NEDD4L-specific down-regulation of I(Ks) and restores the membrane localization.</text>
</comment>
<comment type="similarity">
    <text evidence="6">Belongs to the potassium channel family. KQT (TC 1.A.1.15) subfamily. Kv7.1/KCNQ1 sub-subfamily.</text>
</comment>
<comment type="sequence caution" evidence="6">
    <conflict type="frameshift">
        <sequence resource="EMBL-CDS" id="CAB94848"/>
    </conflict>
</comment>
<accession>Q9MYS6</accession>
<accession>G1SLX4</accession>
<protein>
    <recommendedName>
        <fullName>Potassium voltage-gated channel subfamily KQT member 1</fullName>
    </recommendedName>
    <alternativeName>
        <fullName evidence="1">IKs producing slow voltage-gated potassium channel subunit alpha KvLQT1</fullName>
    </alternativeName>
    <alternativeName>
        <fullName evidence="1">KQT-like 1</fullName>
    </alternativeName>
    <alternativeName>
        <fullName evidence="1">Voltage-gated potassium channel subunit Kv7.1</fullName>
    </alternativeName>
</protein>
<dbReference type="EMBL" id="AAGW02076516">
    <property type="status" value="NOT_ANNOTATED_CDS"/>
    <property type="molecule type" value="Genomic_DNA"/>
</dbReference>
<dbReference type="EMBL" id="AAGW02076517">
    <property type="status" value="NOT_ANNOTATED_CDS"/>
    <property type="molecule type" value="Genomic_DNA"/>
</dbReference>
<dbReference type="EMBL" id="AAGW02076518">
    <property type="status" value="NOT_ANNOTATED_CDS"/>
    <property type="molecule type" value="Genomic_DNA"/>
</dbReference>
<dbReference type="EMBL" id="AAGW02076519">
    <property type="status" value="NOT_ANNOTATED_CDS"/>
    <property type="molecule type" value="Genomic_DNA"/>
</dbReference>
<dbReference type="EMBL" id="AAGW02076520">
    <property type="status" value="NOT_ANNOTATED_CDS"/>
    <property type="molecule type" value="Genomic_DNA"/>
</dbReference>
<dbReference type="EMBL" id="AAGW02076521">
    <property type="status" value="NOT_ANNOTATED_CDS"/>
    <property type="molecule type" value="Genomic_DNA"/>
</dbReference>
<dbReference type="EMBL" id="AAGW02076522">
    <property type="status" value="NOT_ANNOTATED_CDS"/>
    <property type="molecule type" value="Genomic_DNA"/>
</dbReference>
<dbReference type="EMBL" id="AAGW02076523">
    <property type="status" value="NOT_ANNOTATED_CDS"/>
    <property type="molecule type" value="Genomic_DNA"/>
</dbReference>
<dbReference type="EMBL" id="AAGW02076524">
    <property type="status" value="NOT_ANNOTATED_CDS"/>
    <property type="molecule type" value="Genomic_DNA"/>
</dbReference>
<dbReference type="EMBL" id="AAGW02076525">
    <property type="status" value="NOT_ANNOTATED_CDS"/>
    <property type="molecule type" value="Genomic_DNA"/>
</dbReference>
<dbReference type="EMBL" id="AAGW02076526">
    <property type="status" value="NOT_ANNOTATED_CDS"/>
    <property type="molecule type" value="Genomic_DNA"/>
</dbReference>
<dbReference type="EMBL" id="AAGW02076527">
    <property type="status" value="NOT_ANNOTATED_CDS"/>
    <property type="molecule type" value="Genomic_DNA"/>
</dbReference>
<dbReference type="EMBL" id="AAGW02076528">
    <property type="status" value="NOT_ANNOTATED_CDS"/>
    <property type="molecule type" value="Genomic_DNA"/>
</dbReference>
<dbReference type="EMBL" id="AAGW02076529">
    <property type="status" value="NOT_ANNOTATED_CDS"/>
    <property type="molecule type" value="Genomic_DNA"/>
</dbReference>
<dbReference type="EMBL" id="AAGW02076530">
    <property type="status" value="NOT_ANNOTATED_CDS"/>
    <property type="molecule type" value="Genomic_DNA"/>
</dbReference>
<dbReference type="EMBL" id="AAGW02076531">
    <property type="status" value="NOT_ANNOTATED_CDS"/>
    <property type="molecule type" value="Genomic_DNA"/>
</dbReference>
<dbReference type="EMBL" id="AAGW02076532">
    <property type="status" value="NOT_ANNOTATED_CDS"/>
    <property type="molecule type" value="Genomic_DNA"/>
</dbReference>
<dbReference type="EMBL" id="AAGW02076533">
    <property type="status" value="NOT_ANNOTATED_CDS"/>
    <property type="molecule type" value="Genomic_RNA"/>
</dbReference>
<dbReference type="EMBL" id="AJ291316">
    <property type="protein sequence ID" value="CAB94848.1"/>
    <property type="status" value="ALT_FRAME"/>
    <property type="molecule type" value="mRNA"/>
</dbReference>
<dbReference type="BMRB" id="Q9MYS6"/>
<dbReference type="FunCoup" id="Q9MYS6">
    <property type="interactions" value="15"/>
</dbReference>
<dbReference type="STRING" id="9986.ENSOCUP00000040140"/>
<dbReference type="GlyCosmos" id="Q9MYS6">
    <property type="glycosylation" value="1 site, No reported glycans"/>
</dbReference>
<dbReference type="PaxDb" id="9986-ENSOCUP00000003879"/>
<dbReference type="eggNOG" id="KOG1419">
    <property type="taxonomic scope" value="Eukaryota"/>
</dbReference>
<dbReference type="InParanoid" id="Q9MYS6"/>
<dbReference type="TreeFam" id="TF315186"/>
<dbReference type="Proteomes" id="UP000001811">
    <property type="component" value="Unplaced"/>
</dbReference>
<dbReference type="GO" id="GO:0016324">
    <property type="term" value="C:apical plasma membrane"/>
    <property type="evidence" value="ECO:0007669"/>
    <property type="project" value="UniProtKB-SubCell"/>
</dbReference>
<dbReference type="GO" id="GO:0016323">
    <property type="term" value="C:basolateral plasma membrane"/>
    <property type="evidence" value="ECO:0000250"/>
    <property type="project" value="UniProtKB"/>
</dbReference>
<dbReference type="GO" id="GO:0005737">
    <property type="term" value="C:cytoplasm"/>
    <property type="evidence" value="ECO:0000250"/>
    <property type="project" value="UniProtKB"/>
</dbReference>
<dbReference type="GO" id="GO:0030659">
    <property type="term" value="C:cytoplasmic vesicle membrane"/>
    <property type="evidence" value="ECO:0007669"/>
    <property type="project" value="UniProtKB-SubCell"/>
</dbReference>
<dbReference type="GO" id="GO:0005769">
    <property type="term" value="C:early endosome"/>
    <property type="evidence" value="ECO:0007669"/>
    <property type="project" value="UniProtKB-SubCell"/>
</dbReference>
<dbReference type="GO" id="GO:0005783">
    <property type="term" value="C:endoplasmic reticulum"/>
    <property type="evidence" value="ECO:0007669"/>
    <property type="project" value="UniProtKB-SubCell"/>
</dbReference>
<dbReference type="GO" id="GO:0045121">
    <property type="term" value="C:membrane raft"/>
    <property type="evidence" value="ECO:0000250"/>
    <property type="project" value="UniProtKB"/>
</dbReference>
<dbReference type="GO" id="GO:0034702">
    <property type="term" value="C:monoatomic ion channel complex"/>
    <property type="evidence" value="ECO:0000250"/>
    <property type="project" value="UniProtKB"/>
</dbReference>
<dbReference type="GO" id="GO:0005886">
    <property type="term" value="C:plasma membrane"/>
    <property type="evidence" value="ECO:0000250"/>
    <property type="project" value="UniProtKB"/>
</dbReference>
<dbReference type="GO" id="GO:0008076">
    <property type="term" value="C:voltage-gated potassium channel complex"/>
    <property type="evidence" value="ECO:0007669"/>
    <property type="project" value="InterPro"/>
</dbReference>
<dbReference type="GO" id="GO:0005516">
    <property type="term" value="F:calmodulin binding"/>
    <property type="evidence" value="ECO:0007669"/>
    <property type="project" value="UniProtKB-KW"/>
</dbReference>
<dbReference type="GO" id="GO:0005251">
    <property type="term" value="F:delayed rectifier potassium channel activity"/>
    <property type="evidence" value="ECO:0000250"/>
    <property type="project" value="UniProtKB"/>
</dbReference>
<dbReference type="GO" id="GO:0015271">
    <property type="term" value="F:outward rectifier potassium channel activity"/>
    <property type="evidence" value="ECO:0000250"/>
    <property type="project" value="UniProtKB"/>
</dbReference>
<dbReference type="GO" id="GO:0005546">
    <property type="term" value="F:phosphatidylinositol-4,5-bisphosphate binding"/>
    <property type="evidence" value="ECO:0000250"/>
    <property type="project" value="UniProtKB"/>
</dbReference>
<dbReference type="GO" id="GO:0005249">
    <property type="term" value="F:voltage-gated potassium channel activity"/>
    <property type="evidence" value="ECO:0000250"/>
    <property type="project" value="UniProtKB"/>
</dbReference>
<dbReference type="GO" id="GO:0048839">
    <property type="term" value="P:inner ear development"/>
    <property type="evidence" value="ECO:0000250"/>
    <property type="project" value="UniProtKB"/>
</dbReference>
<dbReference type="GO" id="GO:0050892">
    <property type="term" value="P:intestinal absorption"/>
    <property type="evidence" value="ECO:0000250"/>
    <property type="project" value="UniProtKB"/>
</dbReference>
<dbReference type="GO" id="GO:0086009">
    <property type="term" value="P:membrane repolarization"/>
    <property type="evidence" value="ECO:0000250"/>
    <property type="project" value="UniProtKB"/>
</dbReference>
<dbReference type="GO" id="GO:0060453">
    <property type="term" value="P:regulation of gastric acid secretion"/>
    <property type="evidence" value="ECO:0000250"/>
    <property type="project" value="UniProtKB"/>
</dbReference>
<dbReference type="GO" id="GO:0070293">
    <property type="term" value="P:renal absorption"/>
    <property type="evidence" value="ECO:0000250"/>
    <property type="project" value="UniProtKB"/>
</dbReference>
<dbReference type="FunFam" id="1.10.287.70:FF:000113">
    <property type="entry name" value="Potassium voltage-gated channel subfamily KQT member 1"/>
    <property type="match status" value="1"/>
</dbReference>
<dbReference type="FunFam" id="1.20.120.350:FF:000017">
    <property type="entry name" value="potassium voltage-gated channel subfamily KQT member 1"/>
    <property type="match status" value="1"/>
</dbReference>
<dbReference type="Gene3D" id="1.10.287.70">
    <property type="match status" value="1"/>
</dbReference>
<dbReference type="Gene3D" id="6.10.140.1910">
    <property type="match status" value="2"/>
</dbReference>
<dbReference type="Gene3D" id="1.20.120.350">
    <property type="entry name" value="Voltage-gated potassium channels. Chain C"/>
    <property type="match status" value="1"/>
</dbReference>
<dbReference type="InterPro" id="IPR005821">
    <property type="entry name" value="Ion_trans_dom"/>
</dbReference>
<dbReference type="InterPro" id="IPR003937">
    <property type="entry name" value="K_chnl_volt-dep_KCNQ"/>
</dbReference>
<dbReference type="InterPro" id="IPR013821">
    <property type="entry name" value="K_chnl_volt-dep_KCNQ_C"/>
</dbReference>
<dbReference type="InterPro" id="IPR005827">
    <property type="entry name" value="K_chnl_volt-dep_KCQN1"/>
</dbReference>
<dbReference type="InterPro" id="IPR027359">
    <property type="entry name" value="Volt_channel_dom_sf"/>
</dbReference>
<dbReference type="PANTHER" id="PTHR47735:SF14">
    <property type="entry name" value="POTASSIUM VOLTAGE-GATED CHANNEL SUBFAMILY KQT MEMBER 1"/>
    <property type="match status" value="1"/>
</dbReference>
<dbReference type="PANTHER" id="PTHR47735">
    <property type="entry name" value="POTASSIUM VOLTAGE-GATED CHANNEL SUBFAMILY KQT MEMBER 4"/>
    <property type="match status" value="1"/>
</dbReference>
<dbReference type="Pfam" id="PF00520">
    <property type="entry name" value="Ion_trans"/>
    <property type="match status" value="1"/>
</dbReference>
<dbReference type="Pfam" id="PF03520">
    <property type="entry name" value="KCNQ_channel"/>
    <property type="match status" value="1"/>
</dbReference>
<dbReference type="PRINTS" id="PR00169">
    <property type="entry name" value="KCHANNEL"/>
</dbReference>
<dbReference type="PRINTS" id="PR01460">
    <property type="entry name" value="KCNQ1CHANNEL"/>
</dbReference>
<dbReference type="PRINTS" id="PR01459">
    <property type="entry name" value="KCNQCHANNEL"/>
</dbReference>
<dbReference type="SUPFAM" id="SSF81324">
    <property type="entry name" value="Voltage-gated potassium channels"/>
    <property type="match status" value="1"/>
</dbReference>